<reference key="1">
    <citation type="journal article" date="1991" name="Nucleic Acids Res.">
        <title>A human homologue of the Escherichia coli DnaJ heat-shock protein.</title>
        <authorList>
            <person name="Raabe T."/>
            <person name="Manley J.L."/>
        </authorList>
    </citation>
    <scope>NUCLEOTIDE SEQUENCE [MRNA] (ISOFORM 1)</scope>
    <source>
        <tissue>Placenta</tissue>
    </source>
</reference>
<reference key="2">
    <citation type="journal article" date="1993" name="Biochem. Biophys. Res. Commun.">
        <title>Cloning of a cDNA for heat-shock protein hsp40, a human homologue of bacterial DnaJ.</title>
        <authorList>
            <person name="Ohtsuka K."/>
        </authorList>
    </citation>
    <scope>NUCLEOTIDE SEQUENCE [MRNA] (ISOFORM 1)</scope>
    <scope>PROTEIN SEQUENCE OF 2-48</scope>
    <source>
        <tissue>Placenta</tissue>
    </source>
</reference>
<reference key="3">
    <citation type="journal article" date="1996" name="Genomics">
        <title>Genomic cloning of a human heat shock protein 40 (Hsp40) gene (HSPF1) and its chromosomal localization to 19p13.2.</title>
        <authorList>
            <person name="Hata M."/>
            <person name="Okumura K."/>
            <person name="Seto M."/>
            <person name="Ohtsuka K."/>
        </authorList>
    </citation>
    <scope>NUCLEOTIDE SEQUENCE [GENOMIC DNA]</scope>
    <source>
        <tissue>Placenta</tissue>
    </source>
</reference>
<reference key="4">
    <citation type="journal article" date="2004" name="Nat. Genet.">
        <title>Complete sequencing and characterization of 21,243 full-length human cDNAs.</title>
        <authorList>
            <person name="Ota T."/>
            <person name="Suzuki Y."/>
            <person name="Nishikawa T."/>
            <person name="Otsuki T."/>
            <person name="Sugiyama T."/>
            <person name="Irie R."/>
            <person name="Wakamatsu A."/>
            <person name="Hayashi K."/>
            <person name="Sato H."/>
            <person name="Nagai K."/>
            <person name="Kimura K."/>
            <person name="Makita H."/>
            <person name="Sekine M."/>
            <person name="Obayashi M."/>
            <person name="Nishi T."/>
            <person name="Shibahara T."/>
            <person name="Tanaka T."/>
            <person name="Ishii S."/>
            <person name="Yamamoto J."/>
            <person name="Saito K."/>
            <person name="Kawai Y."/>
            <person name="Isono Y."/>
            <person name="Nakamura Y."/>
            <person name="Nagahari K."/>
            <person name="Murakami K."/>
            <person name="Yasuda T."/>
            <person name="Iwayanagi T."/>
            <person name="Wagatsuma M."/>
            <person name="Shiratori A."/>
            <person name="Sudo H."/>
            <person name="Hosoiri T."/>
            <person name="Kaku Y."/>
            <person name="Kodaira H."/>
            <person name="Kondo H."/>
            <person name="Sugawara M."/>
            <person name="Takahashi M."/>
            <person name="Kanda K."/>
            <person name="Yokoi T."/>
            <person name="Furuya T."/>
            <person name="Kikkawa E."/>
            <person name="Omura Y."/>
            <person name="Abe K."/>
            <person name="Kamihara K."/>
            <person name="Katsuta N."/>
            <person name="Sato K."/>
            <person name="Tanikawa M."/>
            <person name="Yamazaki M."/>
            <person name="Ninomiya K."/>
            <person name="Ishibashi T."/>
            <person name="Yamashita H."/>
            <person name="Murakawa K."/>
            <person name="Fujimori K."/>
            <person name="Tanai H."/>
            <person name="Kimata M."/>
            <person name="Watanabe M."/>
            <person name="Hiraoka S."/>
            <person name="Chiba Y."/>
            <person name="Ishida S."/>
            <person name="Ono Y."/>
            <person name="Takiguchi S."/>
            <person name="Watanabe S."/>
            <person name="Yosida M."/>
            <person name="Hotuta T."/>
            <person name="Kusano J."/>
            <person name="Kanehori K."/>
            <person name="Takahashi-Fujii A."/>
            <person name="Hara H."/>
            <person name="Tanase T.-O."/>
            <person name="Nomura Y."/>
            <person name="Togiya S."/>
            <person name="Komai F."/>
            <person name="Hara R."/>
            <person name="Takeuchi K."/>
            <person name="Arita M."/>
            <person name="Imose N."/>
            <person name="Musashino K."/>
            <person name="Yuuki H."/>
            <person name="Oshima A."/>
            <person name="Sasaki N."/>
            <person name="Aotsuka S."/>
            <person name="Yoshikawa Y."/>
            <person name="Matsunawa H."/>
            <person name="Ichihara T."/>
            <person name="Shiohata N."/>
            <person name="Sano S."/>
            <person name="Moriya S."/>
            <person name="Momiyama H."/>
            <person name="Satoh N."/>
            <person name="Takami S."/>
            <person name="Terashima Y."/>
            <person name="Suzuki O."/>
            <person name="Nakagawa S."/>
            <person name="Senoh A."/>
            <person name="Mizoguchi H."/>
            <person name="Goto Y."/>
            <person name="Shimizu F."/>
            <person name="Wakebe H."/>
            <person name="Hishigaki H."/>
            <person name="Watanabe T."/>
            <person name="Sugiyama A."/>
            <person name="Takemoto M."/>
            <person name="Kawakami B."/>
            <person name="Yamazaki M."/>
            <person name="Watanabe K."/>
            <person name="Kumagai A."/>
            <person name="Itakura S."/>
            <person name="Fukuzumi Y."/>
            <person name="Fujimori Y."/>
            <person name="Komiyama M."/>
            <person name="Tashiro H."/>
            <person name="Tanigami A."/>
            <person name="Fujiwara T."/>
            <person name="Ono T."/>
            <person name="Yamada K."/>
            <person name="Fujii Y."/>
            <person name="Ozaki K."/>
            <person name="Hirao M."/>
            <person name="Ohmori Y."/>
            <person name="Kawabata A."/>
            <person name="Hikiji T."/>
            <person name="Kobatake N."/>
            <person name="Inagaki H."/>
            <person name="Ikema Y."/>
            <person name="Okamoto S."/>
            <person name="Okitani R."/>
            <person name="Kawakami T."/>
            <person name="Noguchi S."/>
            <person name="Itoh T."/>
            <person name="Shigeta K."/>
            <person name="Senba T."/>
            <person name="Matsumura K."/>
            <person name="Nakajima Y."/>
            <person name="Mizuno T."/>
            <person name="Morinaga M."/>
            <person name="Sasaki M."/>
            <person name="Togashi T."/>
            <person name="Oyama M."/>
            <person name="Hata H."/>
            <person name="Watanabe M."/>
            <person name="Komatsu T."/>
            <person name="Mizushima-Sugano J."/>
            <person name="Satoh T."/>
            <person name="Shirai Y."/>
            <person name="Takahashi Y."/>
            <person name="Nakagawa K."/>
            <person name="Okumura K."/>
            <person name="Nagase T."/>
            <person name="Nomura N."/>
            <person name="Kikuchi H."/>
            <person name="Masuho Y."/>
            <person name="Yamashita R."/>
            <person name="Nakai K."/>
            <person name="Yada T."/>
            <person name="Nakamura Y."/>
            <person name="Ohara O."/>
            <person name="Isogai T."/>
            <person name="Sugano S."/>
        </authorList>
    </citation>
    <scope>NUCLEOTIDE SEQUENCE [LARGE SCALE MRNA] (ISOFORM 2)</scope>
    <source>
        <tissue>Testis</tissue>
    </source>
</reference>
<reference key="5">
    <citation type="journal article" date="2004" name="Nature">
        <title>The DNA sequence and biology of human chromosome 19.</title>
        <authorList>
            <person name="Grimwood J."/>
            <person name="Gordon L.A."/>
            <person name="Olsen A.S."/>
            <person name="Terry A."/>
            <person name="Schmutz J."/>
            <person name="Lamerdin J.E."/>
            <person name="Hellsten U."/>
            <person name="Goodstein D."/>
            <person name="Couronne O."/>
            <person name="Tran-Gyamfi M."/>
            <person name="Aerts A."/>
            <person name="Altherr M."/>
            <person name="Ashworth L."/>
            <person name="Bajorek E."/>
            <person name="Black S."/>
            <person name="Branscomb E."/>
            <person name="Caenepeel S."/>
            <person name="Carrano A.V."/>
            <person name="Caoile C."/>
            <person name="Chan Y.M."/>
            <person name="Christensen M."/>
            <person name="Cleland C.A."/>
            <person name="Copeland A."/>
            <person name="Dalin E."/>
            <person name="Dehal P."/>
            <person name="Denys M."/>
            <person name="Detter J.C."/>
            <person name="Escobar J."/>
            <person name="Flowers D."/>
            <person name="Fotopulos D."/>
            <person name="Garcia C."/>
            <person name="Georgescu A.M."/>
            <person name="Glavina T."/>
            <person name="Gomez M."/>
            <person name="Gonzales E."/>
            <person name="Groza M."/>
            <person name="Hammon N."/>
            <person name="Hawkins T."/>
            <person name="Haydu L."/>
            <person name="Ho I."/>
            <person name="Huang W."/>
            <person name="Israni S."/>
            <person name="Jett J."/>
            <person name="Kadner K."/>
            <person name="Kimball H."/>
            <person name="Kobayashi A."/>
            <person name="Larionov V."/>
            <person name="Leem S.-H."/>
            <person name="Lopez F."/>
            <person name="Lou Y."/>
            <person name="Lowry S."/>
            <person name="Malfatti S."/>
            <person name="Martinez D."/>
            <person name="McCready P.M."/>
            <person name="Medina C."/>
            <person name="Morgan J."/>
            <person name="Nelson K."/>
            <person name="Nolan M."/>
            <person name="Ovcharenko I."/>
            <person name="Pitluck S."/>
            <person name="Pollard M."/>
            <person name="Popkie A.P."/>
            <person name="Predki P."/>
            <person name="Quan G."/>
            <person name="Ramirez L."/>
            <person name="Rash S."/>
            <person name="Retterer J."/>
            <person name="Rodriguez A."/>
            <person name="Rogers S."/>
            <person name="Salamov A."/>
            <person name="Salazar A."/>
            <person name="She X."/>
            <person name="Smith D."/>
            <person name="Slezak T."/>
            <person name="Solovyev V."/>
            <person name="Thayer N."/>
            <person name="Tice H."/>
            <person name="Tsai M."/>
            <person name="Ustaszewska A."/>
            <person name="Vo N."/>
            <person name="Wagner M."/>
            <person name="Wheeler J."/>
            <person name="Wu K."/>
            <person name="Xie G."/>
            <person name="Yang J."/>
            <person name="Dubchak I."/>
            <person name="Furey T.S."/>
            <person name="DeJong P."/>
            <person name="Dickson M."/>
            <person name="Gordon D."/>
            <person name="Eichler E.E."/>
            <person name="Pennacchio L.A."/>
            <person name="Richardson P."/>
            <person name="Stubbs L."/>
            <person name="Rokhsar D.S."/>
            <person name="Myers R.M."/>
            <person name="Rubin E.M."/>
            <person name="Lucas S.M."/>
        </authorList>
    </citation>
    <scope>NUCLEOTIDE SEQUENCE [LARGE SCALE GENOMIC DNA]</scope>
</reference>
<reference key="6">
    <citation type="journal article" date="2004" name="Genome Res.">
        <title>The status, quality, and expansion of the NIH full-length cDNA project: the Mammalian Gene Collection (MGC).</title>
        <authorList>
            <consortium name="The MGC Project Team"/>
        </authorList>
    </citation>
    <scope>NUCLEOTIDE SEQUENCE [LARGE SCALE MRNA] (ISOFORM 1)</scope>
    <source>
        <tissue>Brain</tissue>
        <tissue>Lung</tissue>
    </source>
</reference>
<reference key="7">
    <citation type="journal article" date="1992" name="Cell Struct. Funct.">
        <title>Intracellular localization and partial amino acid sequence of a stress-inducible 40-kDa protein in HeLa cells.</title>
        <authorList>
            <person name="Hattori H."/>
            <person name="Liu Y.-C."/>
            <person name="Tohnai I."/>
            <person name="Ueda M."/>
            <person name="Kaneda T."/>
            <person name="Kobayashi T."/>
            <person name="Tanabe K."/>
            <person name="Ohtsuka K."/>
        </authorList>
    </citation>
    <scope>PROTEIN SEQUENCE OF 2-49</scope>
    <scope>INDUCTION</scope>
    <scope>SUBCELLULAR LOCATION</scope>
</reference>
<reference key="8">
    <citation type="journal article" date="1998" name="Genes Dev.">
        <title>Molecular chaperones as HSF1-specific transcriptional repressors.</title>
        <authorList>
            <person name="Shi Y."/>
            <person name="Mosser D.D."/>
            <person name="Morimoto R.I."/>
        </authorList>
    </citation>
    <scope>FUNCTION</scope>
    <scope>INTERACTION WITH HSF1</scope>
</reference>
<reference key="9">
    <citation type="journal article" date="1999" name="J. Biol. Chem.">
        <title>The cellular inhibitor of the PKR protein kinase, P58(IPK), is an influenza virus-activated co-chaperone that modulates heat shock protein 70 activity.</title>
        <authorList>
            <person name="Melville M.W."/>
            <person name="Tan S.-L."/>
            <person name="Wambach M."/>
            <person name="Song J."/>
            <person name="Morimoto R.I."/>
            <person name="Katze M.G."/>
        </authorList>
    </citation>
    <scope>INTERACTION WITH DNAJC3</scope>
</reference>
<reference key="10">
    <citation type="journal article" date="2011" name="BMC Syst. Biol.">
        <title>Initial characterization of the human central proteome.</title>
        <authorList>
            <person name="Burkard T.R."/>
            <person name="Planyavsky M."/>
            <person name="Kaupe I."/>
            <person name="Breitwieser F.P."/>
            <person name="Buerckstuemmer T."/>
            <person name="Bennett K.L."/>
            <person name="Superti-Furga G."/>
            <person name="Colinge J."/>
        </authorList>
    </citation>
    <scope>IDENTIFICATION BY MASS SPECTROMETRY [LARGE SCALE ANALYSIS]</scope>
</reference>
<reference key="11">
    <citation type="journal article" date="2012" name="Proc. Natl. Acad. Sci. U.S.A.">
        <title>N-terminal acetylome analyses and functional insights of the N-terminal acetyltransferase NatB.</title>
        <authorList>
            <person name="Van Damme P."/>
            <person name="Lasa M."/>
            <person name="Polevoda B."/>
            <person name="Gazquez C."/>
            <person name="Elosegui-Artola A."/>
            <person name="Kim D.S."/>
            <person name="De Juan-Pardo E."/>
            <person name="Demeyer K."/>
            <person name="Hole K."/>
            <person name="Larrea E."/>
            <person name="Timmerman E."/>
            <person name="Prieto J."/>
            <person name="Arnesen T."/>
            <person name="Sherman F."/>
            <person name="Gevaert K."/>
            <person name="Aldabe R."/>
        </authorList>
    </citation>
    <scope>IDENTIFICATION BY MASS SPECTROMETRY [LARGE SCALE ANALYSIS]</scope>
</reference>
<reference key="12">
    <citation type="journal article" date="2013" name="J. Proteome Res.">
        <title>Toward a comprehensive characterization of a human cancer cell phosphoproteome.</title>
        <authorList>
            <person name="Zhou H."/>
            <person name="Di Palma S."/>
            <person name="Preisinger C."/>
            <person name="Peng M."/>
            <person name="Polat A.N."/>
            <person name="Heck A.J."/>
            <person name="Mohammed S."/>
        </authorList>
    </citation>
    <scope>PHOSPHORYLATION [LARGE SCALE ANALYSIS] AT THR-307</scope>
    <scope>IDENTIFICATION BY MASS SPECTROMETRY [LARGE SCALE ANALYSIS]</scope>
    <source>
        <tissue>Erythroleukemia</tissue>
    </source>
</reference>
<reference key="13">
    <citation type="journal article" date="2014" name="J. Biol. Chem.">
        <title>Binding of human nucleotide exchange factors to heat shock protein 70 (Hsp70) generates functionally distinct complexes in vitro.</title>
        <authorList>
            <person name="Rauch J.N."/>
            <person name="Gestwicki J.E."/>
        </authorList>
    </citation>
    <scope>FUNCTION</scope>
</reference>
<reference key="14">
    <citation type="journal article" date="2014" name="J. Proteomics">
        <title>An enzyme assisted RP-RPLC approach for in-depth analysis of human liver phosphoproteome.</title>
        <authorList>
            <person name="Bian Y."/>
            <person name="Song C."/>
            <person name="Cheng K."/>
            <person name="Dong M."/>
            <person name="Wang F."/>
            <person name="Huang J."/>
            <person name="Sun D."/>
            <person name="Wang L."/>
            <person name="Ye M."/>
            <person name="Zou H."/>
        </authorList>
    </citation>
    <scope>IDENTIFICATION BY MASS SPECTROMETRY [LARGE SCALE ANALYSIS]</scope>
    <source>
        <tissue>Liver</tissue>
    </source>
</reference>
<reference key="15">
    <citation type="journal article" date="2018" name="Nat. Commun.">
        <title>Myopathy associated BAG3 mutations lead to protein aggregation by stalling Hsp70 networks.</title>
        <authorList>
            <person name="Meister-Broekema M."/>
            <person name="Freilich R."/>
            <person name="Jagadeesan C."/>
            <person name="Rauch J.N."/>
            <person name="Bengoechea R."/>
            <person name="Motley W.W."/>
            <person name="Kuiper E.F.E."/>
            <person name="Minoia M."/>
            <person name="Furtado G.V."/>
            <person name="van Waarde M.A.W.H."/>
            <person name="Bird S.J."/>
            <person name="Rebelo A."/>
            <person name="Zuchner S."/>
            <person name="Pytel P."/>
            <person name="Scherer S.S."/>
            <person name="Morelli F.F."/>
            <person name="Carra S."/>
            <person name="Weihl C.C."/>
            <person name="Bergink S."/>
            <person name="Gestwicki J.E."/>
            <person name="Kampinga H.H."/>
        </authorList>
    </citation>
    <scope>INTERACTION WITH BAG3</scope>
</reference>
<reference key="16">
    <citation type="journal article" date="1996" name="J. Mol. Biol.">
        <title>Nuclear magnetic resonance solution structure of the human Hsp40 (HDJ-1) J-domain.</title>
        <authorList>
            <person name="Qian Y.Q."/>
            <person name="Patel D."/>
            <person name="Hartl F.-U."/>
            <person name="McColl D.J."/>
        </authorList>
    </citation>
    <scope>STRUCTURE BY NMR OF 1-76</scope>
</reference>
<organism>
    <name type="scientific">Homo sapiens</name>
    <name type="common">Human</name>
    <dbReference type="NCBI Taxonomy" id="9606"/>
    <lineage>
        <taxon>Eukaryota</taxon>
        <taxon>Metazoa</taxon>
        <taxon>Chordata</taxon>
        <taxon>Craniata</taxon>
        <taxon>Vertebrata</taxon>
        <taxon>Euteleostomi</taxon>
        <taxon>Mammalia</taxon>
        <taxon>Eutheria</taxon>
        <taxon>Euarchontoglires</taxon>
        <taxon>Primates</taxon>
        <taxon>Haplorrhini</taxon>
        <taxon>Catarrhini</taxon>
        <taxon>Hominidae</taxon>
        <taxon>Homo</taxon>
    </lineage>
</organism>
<evidence type="ECO:0000255" key="1">
    <source>
        <dbReference type="PROSITE-ProRule" id="PRU00286"/>
    </source>
</evidence>
<evidence type="ECO:0000269" key="2">
    <source>
    </source>
</evidence>
<evidence type="ECO:0000269" key="3">
    <source>
    </source>
</evidence>
<evidence type="ECO:0000269" key="4">
    <source>
    </source>
</evidence>
<evidence type="ECO:0000269" key="5">
    <source>
    </source>
</evidence>
<evidence type="ECO:0000269" key="6">
    <source>
    </source>
</evidence>
<evidence type="ECO:0000269" key="7">
    <source>
    </source>
</evidence>
<evidence type="ECO:0000303" key="8">
    <source>
    </source>
</evidence>
<evidence type="ECO:0000305" key="9"/>
<evidence type="ECO:0007744" key="10">
    <source>
    </source>
</evidence>
<evidence type="ECO:0007829" key="11">
    <source>
        <dbReference type="PDB" id="2QLD"/>
    </source>
</evidence>
<evidence type="ECO:0007829" key="12">
    <source>
        <dbReference type="PDB" id="3AGX"/>
    </source>
</evidence>
<evidence type="ECO:0007829" key="13">
    <source>
        <dbReference type="PDB" id="4WB7"/>
    </source>
</evidence>
<evidence type="ECO:0007829" key="14">
    <source>
        <dbReference type="PDB" id="6Z5N"/>
    </source>
</evidence>
<evidence type="ECO:0007829" key="15">
    <source>
        <dbReference type="PDB" id="8FEC"/>
    </source>
</evidence>
<accession>P25685</accession>
<accession>B4DX52</accession>
<protein>
    <recommendedName>
        <fullName>DnaJ homolog subfamily B member 1</fullName>
    </recommendedName>
    <alternativeName>
        <fullName>DnaJ protein homolog 1</fullName>
    </alternativeName>
    <alternativeName>
        <fullName>Heat shock 40 kDa protein 1</fullName>
        <shortName>HSP40</shortName>
        <shortName>Heat shock protein 40</shortName>
    </alternativeName>
    <alternativeName>
        <fullName>Human DnaJ protein 1</fullName>
        <shortName>hDj-1</shortName>
    </alternativeName>
</protein>
<sequence>MGKDYYQTLGLARGASDEEIKRAYRRQALRYHPDKNKEPGAEEKFKEIAEAYDVLSDPRKREIFDRYGEEGLKGSGPSGGSGGGANGTSFSYTFHGDPHAMFAEFFGGRNPFDTFFGQRNGEEGMDIDDPFSGFPMGMGGFTNVNFGRSRSAQEPARKKQDPPVTHDLRVSLEEIYSGCTKKMKISHKRLNPDGKSIRNEDKILTIEVKKGWKEGTKITFPKEGDQTSNNIPADIVFVLKDKPHNIFKRDGSDVIYPARISLREALCGCTVNVPTLDGRTIPVVFKDVIRPGMRRKVPGEGLPLPKTPEKRGDLIIEFEVIFPERIPQTSRTVLEQVLPI</sequence>
<name>DNJB1_HUMAN</name>
<feature type="initiator methionine" description="Removed" evidence="2 5">
    <location>
        <position position="1"/>
    </location>
</feature>
<feature type="chain" id="PRO_0000071016" description="DnaJ homolog subfamily B member 1">
    <location>
        <begin position="2"/>
        <end position="340"/>
    </location>
</feature>
<feature type="domain" description="J" evidence="1">
    <location>
        <begin position="2"/>
        <end position="70"/>
    </location>
</feature>
<feature type="modified residue" description="Phosphothreonine" evidence="10">
    <location>
        <position position="307"/>
    </location>
</feature>
<feature type="splice variant" id="VSP_056414" description="In isoform 2." evidence="8">
    <location>
        <begin position="1"/>
        <end position="100"/>
    </location>
</feature>
<feature type="sequence conflict" description="In Ref. 1; CAA44287." evidence="9" ref="1">
    <original>G</original>
    <variation>L</variation>
    <location>
        <position position="68"/>
    </location>
</feature>
<feature type="sequence conflict" description="In Ref. 1; CAA44287." evidence="9" ref="1">
    <original>R</original>
    <variation>C</variation>
    <location>
        <position position="150"/>
    </location>
</feature>
<feature type="sequence conflict" description="In Ref. 1; CAA44287." evidence="9" ref="1">
    <original>M</original>
    <variation>T</variation>
    <location>
        <position position="183"/>
    </location>
</feature>
<feature type="sequence conflict" description="In Ref. 1; CAA44287." evidence="9" ref="1">
    <original>V</original>
    <variation>A</variation>
    <location>
        <position position="320"/>
    </location>
</feature>
<feature type="helix" evidence="13">
    <location>
        <begin position="5"/>
        <end position="9"/>
    </location>
</feature>
<feature type="helix" evidence="13">
    <location>
        <begin position="17"/>
        <end position="31"/>
    </location>
</feature>
<feature type="turn" evidence="13">
    <location>
        <begin position="33"/>
        <end position="35"/>
    </location>
</feature>
<feature type="strand" evidence="15">
    <location>
        <begin position="38"/>
        <end position="40"/>
    </location>
</feature>
<feature type="helix" evidence="13">
    <location>
        <begin position="41"/>
        <end position="55"/>
    </location>
</feature>
<feature type="helix" evidence="13">
    <location>
        <begin position="58"/>
        <end position="70"/>
    </location>
</feature>
<feature type="turn" evidence="14">
    <location>
        <begin position="77"/>
        <end position="87"/>
    </location>
</feature>
<feature type="helix" evidence="14">
    <location>
        <begin position="99"/>
        <end position="105"/>
    </location>
</feature>
<feature type="strand" evidence="12">
    <location>
        <begin position="166"/>
        <end position="170"/>
    </location>
</feature>
<feature type="helix" evidence="12">
    <location>
        <begin position="172"/>
        <end position="177"/>
    </location>
</feature>
<feature type="strand" evidence="12">
    <location>
        <begin position="179"/>
        <end position="190"/>
    </location>
</feature>
<feature type="turn" evidence="11">
    <location>
        <begin position="191"/>
        <end position="193"/>
    </location>
</feature>
<feature type="strand" evidence="12">
    <location>
        <begin position="197"/>
        <end position="208"/>
    </location>
</feature>
<feature type="strand" evidence="12">
    <location>
        <begin position="217"/>
        <end position="220"/>
    </location>
</feature>
<feature type="strand" evidence="12">
    <location>
        <begin position="228"/>
        <end position="230"/>
    </location>
</feature>
<feature type="strand" evidence="12">
    <location>
        <begin position="235"/>
        <end position="241"/>
    </location>
</feature>
<feature type="strand" evidence="12">
    <location>
        <begin position="248"/>
        <end position="250"/>
    </location>
</feature>
<feature type="strand" evidence="12">
    <location>
        <begin position="253"/>
        <end position="261"/>
    </location>
</feature>
<feature type="helix" evidence="12">
    <location>
        <begin position="262"/>
        <end position="267"/>
    </location>
</feature>
<feature type="strand" evidence="12">
    <location>
        <begin position="269"/>
        <end position="274"/>
    </location>
</feature>
<feature type="strand" evidence="12">
    <location>
        <begin position="280"/>
        <end position="285"/>
    </location>
</feature>
<feature type="strand" evidence="12">
    <location>
        <begin position="294"/>
        <end position="297"/>
    </location>
</feature>
<feature type="strand" evidence="12">
    <location>
        <begin position="305"/>
        <end position="307"/>
    </location>
</feature>
<feature type="strand" evidence="12">
    <location>
        <begin position="314"/>
        <end position="321"/>
    </location>
</feature>
<feature type="helix" evidence="12">
    <location>
        <begin position="328"/>
        <end position="337"/>
    </location>
</feature>
<comment type="function">
    <text evidence="3 6">Interacts with HSP70 and can stimulate its ATPase activity. Stimulates the association between HSC70 and HIP. Negatively regulates heat shock-induced HSF1 transcriptional activity during the attenuation and recovery phase period of the heat shock response (PubMed:9499401). Stimulates ATP hydrolysis and the folding of unfolded proteins mediated by HSPA1A/B (in vitro) (PubMed:24318877).</text>
</comment>
<comment type="subunit">
    <text evidence="4 6 7">Interacts with DNAJC3 (PubMed:9920933). Interacts with HSF1 (via transactivation domain); this interaction results in the inhibition of heat shock- and HSF1-induced transcriptional activity during the attenuation and recovery phase period of the heat shock response (PubMed:9499401). Interacts with BAG3 (PubMed:30559338).</text>
</comment>
<comment type="interaction">
    <interactant intactId="EBI-357034">
        <id>P25685</id>
    </interactant>
    <interactant intactId="EBI-295634">
        <id>Q16543</id>
        <label>CDC37</label>
    </interactant>
    <organismsDiffer>false</organismsDiffer>
    <experiments>3</experiments>
</comment>
<comment type="interaction">
    <interactant intactId="EBI-357034">
        <id>P25685</id>
    </interactant>
    <interactant intactId="EBI-618189">
        <id>Q06547-2</id>
        <label>GABPB1</label>
    </interactant>
    <organismsDiffer>false</organismsDiffer>
    <experiments>3</experiments>
</comment>
<comment type="interaction">
    <interactant intactId="EBI-357034">
        <id>P25685</id>
    </interactant>
    <interactant intactId="EBI-9088619">
        <id>Q06547-3</id>
        <label>GABPB1</label>
    </interactant>
    <organismsDiffer>false</organismsDiffer>
    <experiments>3</experiments>
</comment>
<comment type="interaction">
    <interactant intactId="EBI-357034">
        <id>P25685</id>
    </interactant>
    <interactant intactId="EBI-9091052">
        <id>Q6P4D5-2</id>
        <label>PABIR3</label>
    </interactant>
    <organismsDiffer>false</organismsDiffer>
    <experiments>3</experiments>
</comment>
<comment type="interaction">
    <interactant intactId="EBI-357034">
        <id>P25685</id>
    </interactant>
    <interactant intactId="EBI-476295">
        <id>P31947</id>
        <label>SFN</label>
    </interactant>
    <organismsDiffer>false</organismsDiffer>
    <experiments>2</experiments>
</comment>
<comment type="interaction">
    <interactant intactId="EBI-357034">
        <id>P25685</id>
    </interactant>
    <interactant intactId="EBI-15904933">
        <id>O60907-2</id>
        <label>TBL1X</label>
    </interactant>
    <organismsDiffer>false</organismsDiffer>
    <experiments>3</experiments>
</comment>
<comment type="interaction">
    <interactant intactId="EBI-357034">
        <id>P25685</id>
    </interactant>
    <interactant intactId="EBI-710997">
        <id>P54274</id>
        <label>TERF1</label>
    </interactant>
    <organismsDiffer>false</organismsDiffer>
    <experiments>2</experiments>
</comment>
<comment type="interaction">
    <interactant intactId="EBI-357034">
        <id>P25685</id>
    </interactant>
    <interactant intactId="EBI-4314702">
        <id>Q03403</id>
        <label>TFF2</label>
    </interactant>
    <organismsDiffer>false</organismsDiffer>
    <experiments>3</experiments>
</comment>
<comment type="interaction">
    <interactant intactId="EBI-357034">
        <id>P25685</id>
    </interactant>
    <interactant intactId="EBI-923010">
        <id>Q14166</id>
        <label>TTLL12</label>
    </interactant>
    <organismsDiffer>false</organismsDiffer>
    <experiments>7</experiments>
</comment>
<comment type="interaction">
    <interactant intactId="EBI-357034">
        <id>P25685</id>
    </interactant>
    <interactant intactId="EBI-25834258">
        <id>P13051-2</id>
        <label>UNG</label>
    </interactant>
    <organismsDiffer>false</organismsDiffer>
    <experiments>3</experiments>
</comment>
<comment type="interaction">
    <interactant intactId="EBI-357034">
        <id>P25685</id>
    </interactant>
    <interactant intactId="EBI-11745701">
        <id>P19544-6</id>
        <label>WT1</label>
    </interactant>
    <organismsDiffer>false</organismsDiffer>
    <experiments>3</experiments>
</comment>
<comment type="interaction">
    <interactant intactId="EBI-357034">
        <id>P25685</id>
    </interactant>
    <interactant intactId="EBI-356498">
        <id>P62258</id>
        <label>YWHAE</label>
    </interactant>
    <organismsDiffer>false</organismsDiffer>
    <experiments>2</experiments>
</comment>
<comment type="interaction">
    <interactant intactId="EBI-357034">
        <id>P25685</id>
    </interactant>
    <interactant intactId="EBI-309727">
        <id>Q62392</id>
        <label>Phlda1</label>
    </interactant>
    <organismsDiffer>true</organismsDiffer>
    <experiments>2</experiments>
</comment>
<comment type="subcellular location">
    <subcellularLocation>
        <location evidence="2">Cytoplasm</location>
    </subcellularLocation>
    <subcellularLocation>
        <location evidence="2">Nucleus</location>
    </subcellularLocation>
    <subcellularLocation>
        <location evidence="2">Nucleus</location>
        <location evidence="2">Nucleolus</location>
    </subcellularLocation>
    <text>Translocates rapidly from the cytoplasm to the nucleus, and especially to the nucleoli, upon heat shock.</text>
</comment>
<comment type="alternative products">
    <event type="alternative splicing"/>
    <isoform>
        <id>P25685-1</id>
        <name>1</name>
        <sequence type="displayed"/>
    </isoform>
    <isoform>
        <id>P25685-2</id>
        <name>2</name>
        <sequence type="described" ref="VSP_056414"/>
    </isoform>
</comment>
<comment type="induction">
    <text evidence="2">By heat shock.</text>
</comment>
<comment type="sequence caution" evidence="9">
    <conflict type="frameshift">
        <sequence resource="EMBL-CDS" id="CAA44287"/>
    </conflict>
</comment>
<gene>
    <name type="primary">DNAJB1</name>
    <name type="synonym">DNAJ1</name>
    <name type="synonym">HDJ1</name>
    <name type="synonym">HSPF1</name>
</gene>
<dbReference type="EMBL" id="X62421">
    <property type="protein sequence ID" value="CAA44287.1"/>
    <property type="status" value="ALT_FRAME"/>
    <property type="molecule type" value="mRNA"/>
</dbReference>
<dbReference type="EMBL" id="D49547">
    <property type="protein sequence ID" value="BAA08495.1"/>
    <property type="molecule type" value="mRNA"/>
</dbReference>
<dbReference type="EMBL" id="D85429">
    <property type="protein sequence ID" value="BAA12819.1"/>
    <property type="molecule type" value="Genomic_DNA"/>
</dbReference>
<dbReference type="EMBL" id="AK301817">
    <property type="protein sequence ID" value="BAG63264.1"/>
    <property type="molecule type" value="mRNA"/>
</dbReference>
<dbReference type="EMBL" id="AC009004">
    <property type="status" value="NOT_ANNOTATED_CDS"/>
    <property type="molecule type" value="Genomic_DNA"/>
</dbReference>
<dbReference type="EMBL" id="AC012318">
    <property type="status" value="NOT_ANNOTATED_CDS"/>
    <property type="molecule type" value="Genomic_DNA"/>
</dbReference>
<dbReference type="EMBL" id="BC002352">
    <property type="protein sequence ID" value="AAH02352.1"/>
    <property type="molecule type" value="mRNA"/>
</dbReference>
<dbReference type="EMBL" id="BC019827">
    <property type="protein sequence ID" value="AAH19827.1"/>
    <property type="molecule type" value="mRNA"/>
</dbReference>
<dbReference type="CCDS" id="CCDS12312.1">
    <molecule id="P25685-1"/>
</dbReference>
<dbReference type="CCDS" id="CCDS74295.1">
    <molecule id="P25685-2"/>
</dbReference>
<dbReference type="PIR" id="JN0912">
    <property type="entry name" value="JN0912"/>
</dbReference>
<dbReference type="PIR" id="S20062">
    <property type="entry name" value="S20062"/>
</dbReference>
<dbReference type="RefSeq" id="NP_001287843.1">
    <molecule id="P25685-2"/>
    <property type="nucleotide sequence ID" value="NM_001300914.2"/>
</dbReference>
<dbReference type="RefSeq" id="NP_001300893.1">
    <molecule id="P25685-2"/>
    <property type="nucleotide sequence ID" value="NM_001313964.2"/>
</dbReference>
<dbReference type="RefSeq" id="NP_006136.1">
    <molecule id="P25685-1"/>
    <property type="nucleotide sequence ID" value="NM_006145.3"/>
</dbReference>
<dbReference type="RefSeq" id="XP_006722796.1">
    <molecule id="P25685-2"/>
    <property type="nucleotide sequence ID" value="XM_006722733.3"/>
</dbReference>
<dbReference type="RefSeq" id="XP_006722797.1">
    <property type="nucleotide sequence ID" value="XM_006722734.3"/>
</dbReference>
<dbReference type="RefSeq" id="XP_011526258.1">
    <molecule id="P25685-2"/>
    <property type="nucleotide sequence ID" value="XM_011527956.4"/>
</dbReference>
<dbReference type="RefSeq" id="XP_047294701.1">
    <molecule id="P25685-2"/>
    <property type="nucleotide sequence ID" value="XM_047438745.1"/>
</dbReference>
<dbReference type="RefSeq" id="XP_047294702.1">
    <molecule id="P25685-2"/>
    <property type="nucleotide sequence ID" value="XM_047438746.1"/>
</dbReference>
<dbReference type="RefSeq" id="XP_054176789.1">
    <molecule id="P25685-2"/>
    <property type="nucleotide sequence ID" value="XM_054320814.1"/>
</dbReference>
<dbReference type="PDB" id="1HDJ">
    <property type="method" value="NMR"/>
    <property type="chains" value="A=1-76"/>
</dbReference>
<dbReference type="PDB" id="2QLD">
    <property type="method" value="X-ray"/>
    <property type="resolution" value="2.70 A"/>
    <property type="chains" value="A=158-340"/>
</dbReference>
<dbReference type="PDB" id="3AGX">
    <property type="method" value="X-ray"/>
    <property type="resolution" value="1.85 A"/>
    <property type="chains" value="A/B=161-340"/>
</dbReference>
<dbReference type="PDB" id="3AGY">
    <property type="method" value="X-ray"/>
    <property type="resolution" value="1.85 A"/>
    <property type="chains" value="A/B=161-340"/>
</dbReference>
<dbReference type="PDB" id="3AGZ">
    <property type="method" value="X-ray"/>
    <property type="resolution" value="2.51 A"/>
    <property type="chains" value="A/B=151-340"/>
</dbReference>
<dbReference type="PDB" id="4WB7">
    <property type="method" value="X-ray"/>
    <property type="resolution" value="1.90 A"/>
    <property type="chains" value="A/B=2-70"/>
</dbReference>
<dbReference type="PDB" id="6BYR">
    <property type="method" value="X-ray"/>
    <property type="resolution" value="3.66 A"/>
    <property type="chains" value="A/C=2-70"/>
</dbReference>
<dbReference type="PDB" id="6WJF">
    <property type="method" value="EM"/>
    <property type="resolution" value="7.50 A"/>
    <property type="chains" value="A/B=2-70"/>
</dbReference>
<dbReference type="PDB" id="6WJG">
    <property type="method" value="EM"/>
    <property type="resolution" value="6.20 A"/>
    <property type="chains" value="A/B=2-70"/>
</dbReference>
<dbReference type="PDB" id="6Z5N">
    <property type="method" value="NMR"/>
    <property type="chains" value="A=1-110"/>
</dbReference>
<dbReference type="PDB" id="7NDX">
    <property type="method" value="X-ray"/>
    <property type="resolution" value="2.54 A"/>
    <property type="chains" value="A=157-340"/>
</dbReference>
<dbReference type="PDB" id="8FE2">
    <property type="method" value="X-ray"/>
    <property type="resolution" value="2.34 A"/>
    <property type="chains" value="A/B=2-70"/>
</dbReference>
<dbReference type="PDB" id="8FE5">
    <property type="method" value="X-ray"/>
    <property type="resolution" value="2.51 A"/>
    <property type="chains" value="A/B=2-70"/>
</dbReference>
<dbReference type="PDB" id="8FEC">
    <property type="method" value="X-ray"/>
    <property type="resolution" value="2.70 A"/>
    <property type="chains" value="A/B=2-70"/>
</dbReference>
<dbReference type="PDBsum" id="1HDJ"/>
<dbReference type="PDBsum" id="2QLD"/>
<dbReference type="PDBsum" id="3AGX"/>
<dbReference type="PDBsum" id="3AGY"/>
<dbReference type="PDBsum" id="3AGZ"/>
<dbReference type="PDBsum" id="4WB7"/>
<dbReference type="PDBsum" id="6BYR"/>
<dbReference type="PDBsum" id="6WJF"/>
<dbReference type="PDBsum" id="6WJG"/>
<dbReference type="PDBsum" id="6Z5N"/>
<dbReference type="PDBsum" id="7NDX"/>
<dbReference type="PDBsum" id="8FE2"/>
<dbReference type="PDBsum" id="8FE5"/>
<dbReference type="PDBsum" id="8FEC"/>
<dbReference type="SMR" id="P25685"/>
<dbReference type="BioGRID" id="109569">
    <property type="interactions" value="319"/>
</dbReference>
<dbReference type="CORUM" id="P25685"/>
<dbReference type="DIP" id="DIP-41180N"/>
<dbReference type="FunCoup" id="P25685">
    <property type="interactions" value="3015"/>
</dbReference>
<dbReference type="IntAct" id="P25685">
    <property type="interactions" value="191"/>
</dbReference>
<dbReference type="MINT" id="P25685"/>
<dbReference type="STRING" id="9606.ENSP00000254322"/>
<dbReference type="GlyGen" id="P25685">
    <property type="glycosylation" value="1 site, 1 O-linked glycan (1 site)"/>
</dbReference>
<dbReference type="iPTMnet" id="P25685"/>
<dbReference type="PhosphoSitePlus" id="P25685"/>
<dbReference type="BioMuta" id="DNAJB1"/>
<dbReference type="DMDM" id="1706473"/>
<dbReference type="REPRODUCTION-2DPAGE" id="IPI00015947"/>
<dbReference type="jPOST" id="P25685"/>
<dbReference type="MassIVE" id="P25685"/>
<dbReference type="PaxDb" id="9606-ENSP00000254322"/>
<dbReference type="PeptideAtlas" id="P25685"/>
<dbReference type="ProteomicsDB" id="5411"/>
<dbReference type="ProteomicsDB" id="54280">
    <molecule id="P25685-1"/>
</dbReference>
<dbReference type="Pumba" id="P25685"/>
<dbReference type="Antibodypedia" id="26735">
    <property type="antibodies" value="814 antibodies from 41 providers"/>
</dbReference>
<dbReference type="DNASU" id="3337"/>
<dbReference type="Ensembl" id="ENST00000254322.3">
    <molecule id="P25685-1"/>
    <property type="protein sequence ID" value="ENSP00000254322.1"/>
    <property type="gene ID" value="ENSG00000132002.10"/>
</dbReference>
<dbReference type="Ensembl" id="ENST00000396969.8">
    <molecule id="P25685-2"/>
    <property type="protein sequence ID" value="ENSP00000444212.1"/>
    <property type="gene ID" value="ENSG00000132002.10"/>
</dbReference>
<dbReference type="Ensembl" id="ENST00000594099.6">
    <molecule id="P25685-2"/>
    <property type="protein sequence ID" value="ENSP00000470460.2"/>
    <property type="gene ID" value="ENSG00000132002.10"/>
</dbReference>
<dbReference type="Ensembl" id="ENST00000595992.6">
    <molecule id="P25685-2"/>
    <property type="protein sequence ID" value="ENSP00000470596.2"/>
    <property type="gene ID" value="ENSG00000132002.10"/>
</dbReference>
<dbReference type="Ensembl" id="ENST00000596075.2">
    <molecule id="P25685-2"/>
    <property type="protein sequence ID" value="ENSP00000471603.2"/>
    <property type="gene ID" value="ENSG00000132002.10"/>
</dbReference>
<dbReference type="Ensembl" id="ENST00000596853.6">
    <molecule id="P25685-2"/>
    <property type="protein sequence ID" value="ENSP00000470063.2"/>
    <property type="gene ID" value="ENSG00000132002.10"/>
</dbReference>
<dbReference type="Ensembl" id="ENST00000598235.2">
    <molecule id="P25685-2"/>
    <property type="protein sequence ID" value="ENSP00000471073.2"/>
    <property type="gene ID" value="ENSG00000132002.10"/>
</dbReference>
<dbReference type="Ensembl" id="ENST00000598692.2">
    <molecule id="P25685-2"/>
    <property type="protein sequence ID" value="ENSP00000472886.2"/>
    <property type="gene ID" value="ENSG00000132002.10"/>
</dbReference>
<dbReference type="Ensembl" id="ENST00000601533.6">
    <molecule id="P25685-2"/>
    <property type="protein sequence ID" value="ENSP00000471798.2"/>
    <property type="gene ID" value="ENSG00000132002.10"/>
</dbReference>
<dbReference type="Ensembl" id="ENST00000676515.1">
    <molecule id="P25685-2"/>
    <property type="protein sequence ID" value="ENSP00000504619.1"/>
    <property type="gene ID" value="ENSG00000132002.10"/>
</dbReference>
<dbReference type="Ensembl" id="ENST00000676982.1">
    <molecule id="P25685-2"/>
    <property type="protein sequence ID" value="ENSP00000504186.1"/>
    <property type="gene ID" value="ENSG00000132002.10"/>
</dbReference>
<dbReference type="Ensembl" id="ENST00000677204.1">
    <molecule id="P25685-2"/>
    <property type="protein sequence ID" value="ENSP00000503027.1"/>
    <property type="gene ID" value="ENSG00000132002.10"/>
</dbReference>
<dbReference type="Ensembl" id="ENST00000677762.1">
    <molecule id="P25685-2"/>
    <property type="protein sequence ID" value="ENSP00000503810.1"/>
    <property type="gene ID" value="ENSG00000132002.10"/>
</dbReference>
<dbReference type="Ensembl" id="ENST00000678009.1">
    <molecule id="P25685-2"/>
    <property type="protein sequence ID" value="ENSP00000504352.1"/>
    <property type="gene ID" value="ENSG00000132002.10"/>
</dbReference>
<dbReference type="Ensembl" id="ENST00000678098.1">
    <molecule id="P25685-2"/>
    <property type="protein sequence ID" value="ENSP00000503271.1"/>
    <property type="gene ID" value="ENSG00000132002.10"/>
</dbReference>
<dbReference type="Ensembl" id="ENST00000679223.2">
    <molecule id="P25685-2"/>
    <property type="protein sequence ID" value="ENSP00000504527.1"/>
    <property type="gene ID" value="ENSG00000132002.10"/>
</dbReference>
<dbReference type="GeneID" id="3337"/>
<dbReference type="KEGG" id="hsa:3337"/>
<dbReference type="MANE-Select" id="ENST00000254322.3">
    <property type="protein sequence ID" value="ENSP00000254322.1"/>
    <property type="RefSeq nucleotide sequence ID" value="NM_006145.3"/>
    <property type="RefSeq protein sequence ID" value="NP_006136.1"/>
</dbReference>
<dbReference type="UCSC" id="uc010xnr.2">
    <molecule id="P25685-1"/>
    <property type="organism name" value="human"/>
</dbReference>
<dbReference type="AGR" id="HGNC:5270"/>
<dbReference type="CTD" id="3337"/>
<dbReference type="DisGeNET" id="3337"/>
<dbReference type="GeneCards" id="DNAJB1"/>
<dbReference type="HGNC" id="HGNC:5270">
    <property type="gene designation" value="DNAJB1"/>
</dbReference>
<dbReference type="HPA" id="ENSG00000132002">
    <property type="expression patterns" value="Low tissue specificity"/>
</dbReference>
<dbReference type="MalaCards" id="DNAJB1"/>
<dbReference type="MIM" id="604572">
    <property type="type" value="gene"/>
</dbReference>
<dbReference type="neXtProt" id="NX_P25685"/>
<dbReference type="OpenTargets" id="ENSG00000132002"/>
<dbReference type="Orphanet" id="401920">
    <property type="disease" value="Fibrolamellar hepatocellular carcinoma"/>
</dbReference>
<dbReference type="PharmGKB" id="PA27412"/>
<dbReference type="VEuPathDB" id="HostDB:ENSG00000132002"/>
<dbReference type="eggNOG" id="KOG0714">
    <property type="taxonomic scope" value="Eukaryota"/>
</dbReference>
<dbReference type="GeneTree" id="ENSGT00940000160312"/>
<dbReference type="HOGENOM" id="CLU_017633_0_0_1"/>
<dbReference type="InParanoid" id="P25685"/>
<dbReference type="OMA" id="SHSFNFH"/>
<dbReference type="OrthoDB" id="550424at2759"/>
<dbReference type="PAN-GO" id="P25685">
    <property type="GO annotations" value="7 GO annotations based on evolutionary models"/>
</dbReference>
<dbReference type="PhylomeDB" id="P25685"/>
<dbReference type="TreeFam" id="TF105141"/>
<dbReference type="PathwayCommons" id="P25685"/>
<dbReference type="Reactome" id="R-HSA-3371453">
    <property type="pathway name" value="Regulation of HSF1-mediated heat shock response"/>
</dbReference>
<dbReference type="Reactome" id="R-HSA-3371497">
    <property type="pathway name" value="HSP90 chaperone cycle for steroid hormone receptors (SHR) in the presence of ligand"/>
</dbReference>
<dbReference type="Reactome" id="R-HSA-3371568">
    <property type="pathway name" value="Attenuation phase"/>
</dbReference>
<dbReference type="Reactome" id="R-HSA-3371571">
    <property type="pathway name" value="HSF1-dependent transactivation"/>
</dbReference>
<dbReference type="Reactome" id="R-HSA-5687128">
    <property type="pathway name" value="MAPK6/MAPK4 signaling"/>
</dbReference>
<dbReference type="SignaLink" id="P25685"/>
<dbReference type="SIGNOR" id="P25685"/>
<dbReference type="BioGRID-ORCS" id="3337">
    <property type="hits" value="35 hits in 1116 CRISPR screens"/>
</dbReference>
<dbReference type="CD-CODE" id="804901D1">
    <property type="entry name" value="Nuclear speckle"/>
</dbReference>
<dbReference type="CD-CODE" id="91857CE7">
    <property type="entry name" value="Nucleolus"/>
</dbReference>
<dbReference type="CD-CODE" id="DEE660B4">
    <property type="entry name" value="Stress granule"/>
</dbReference>
<dbReference type="CD-CODE" id="FB4E32DD">
    <property type="entry name" value="Presynaptic clusters and postsynaptic densities"/>
</dbReference>
<dbReference type="ChiTaRS" id="DNAJB1">
    <property type="organism name" value="human"/>
</dbReference>
<dbReference type="EvolutionaryTrace" id="P25685"/>
<dbReference type="GeneWiki" id="DNAJB1"/>
<dbReference type="GenomeRNAi" id="3337"/>
<dbReference type="Pharos" id="P25685">
    <property type="development level" value="Tbio"/>
</dbReference>
<dbReference type="PRO" id="PR:P25685"/>
<dbReference type="Proteomes" id="UP000005640">
    <property type="component" value="Chromosome 19"/>
</dbReference>
<dbReference type="RNAct" id="P25685">
    <property type="molecule type" value="protein"/>
</dbReference>
<dbReference type="Bgee" id="ENSG00000132002">
    <property type="expression patterns" value="Expressed in lower esophagus mucosa and 209 other cell types or tissues"/>
</dbReference>
<dbReference type="ExpressionAtlas" id="P25685">
    <property type="expression patterns" value="baseline and differential"/>
</dbReference>
<dbReference type="GO" id="GO:0005737">
    <property type="term" value="C:cytoplasm"/>
    <property type="evidence" value="ECO:0000314"/>
    <property type="project" value="BHF-UCL"/>
</dbReference>
<dbReference type="GO" id="GO:0005829">
    <property type="term" value="C:cytosol"/>
    <property type="evidence" value="ECO:0000314"/>
    <property type="project" value="UniProtKB"/>
</dbReference>
<dbReference type="GO" id="GO:0043197">
    <property type="term" value="C:dendritic spine"/>
    <property type="evidence" value="ECO:0007669"/>
    <property type="project" value="Ensembl"/>
</dbReference>
<dbReference type="GO" id="GO:0070062">
    <property type="term" value="C:extracellular exosome"/>
    <property type="evidence" value="ECO:0007005"/>
    <property type="project" value="UniProtKB"/>
</dbReference>
<dbReference type="GO" id="GO:0098978">
    <property type="term" value="C:glutamatergic synapse"/>
    <property type="evidence" value="ECO:0007669"/>
    <property type="project" value="Ensembl"/>
</dbReference>
<dbReference type="GO" id="GO:0043025">
    <property type="term" value="C:neuronal cell body"/>
    <property type="evidence" value="ECO:0007669"/>
    <property type="project" value="Ensembl"/>
</dbReference>
<dbReference type="GO" id="GO:0005730">
    <property type="term" value="C:nucleolus"/>
    <property type="evidence" value="ECO:0007669"/>
    <property type="project" value="UniProtKB-SubCell"/>
</dbReference>
<dbReference type="GO" id="GO:0005654">
    <property type="term" value="C:nucleoplasm"/>
    <property type="evidence" value="ECO:0000314"/>
    <property type="project" value="HPA"/>
</dbReference>
<dbReference type="GO" id="GO:0005634">
    <property type="term" value="C:nucleus"/>
    <property type="evidence" value="ECO:0007005"/>
    <property type="project" value="UniProtKB"/>
</dbReference>
<dbReference type="GO" id="GO:0014069">
    <property type="term" value="C:postsynaptic density"/>
    <property type="evidence" value="ECO:0007669"/>
    <property type="project" value="Ensembl"/>
</dbReference>
<dbReference type="GO" id="GO:0061827">
    <property type="term" value="C:sperm head"/>
    <property type="evidence" value="ECO:0007669"/>
    <property type="project" value="Ensembl"/>
</dbReference>
<dbReference type="GO" id="GO:0001671">
    <property type="term" value="F:ATPase activator activity"/>
    <property type="evidence" value="ECO:0000314"/>
    <property type="project" value="UniProtKB"/>
</dbReference>
<dbReference type="GO" id="GO:0051117">
    <property type="term" value="F:ATPase binding"/>
    <property type="evidence" value="ECO:0000353"/>
    <property type="project" value="BHF-UCL"/>
</dbReference>
<dbReference type="GO" id="GO:0045296">
    <property type="term" value="F:cadherin binding"/>
    <property type="evidence" value="ECO:0007005"/>
    <property type="project" value="BHF-UCL"/>
</dbReference>
<dbReference type="GO" id="GO:0030544">
    <property type="term" value="F:Hsp70 protein binding"/>
    <property type="evidence" value="ECO:0000353"/>
    <property type="project" value="BHF-UCL"/>
</dbReference>
<dbReference type="GO" id="GO:0044183">
    <property type="term" value="F:protein folding chaperone"/>
    <property type="evidence" value="ECO:0007669"/>
    <property type="project" value="Ensembl"/>
</dbReference>
<dbReference type="GO" id="GO:0051087">
    <property type="term" value="F:protein-folding chaperone binding"/>
    <property type="evidence" value="ECO:0000353"/>
    <property type="project" value="UniProtKB"/>
</dbReference>
<dbReference type="GO" id="GO:0003714">
    <property type="term" value="F:transcription corepressor activity"/>
    <property type="evidence" value="ECO:0000314"/>
    <property type="project" value="UniProtKB"/>
</dbReference>
<dbReference type="GO" id="GO:0140416">
    <property type="term" value="F:transcription regulator inhibitor activity"/>
    <property type="evidence" value="ECO:0000314"/>
    <property type="project" value="GO_Central"/>
</dbReference>
<dbReference type="GO" id="GO:0051082">
    <property type="term" value="F:unfolded protein binding"/>
    <property type="evidence" value="ECO:0000314"/>
    <property type="project" value="UniProtKB"/>
</dbReference>
<dbReference type="GO" id="GO:0034605">
    <property type="term" value="P:cellular response to heat"/>
    <property type="evidence" value="ECO:0000314"/>
    <property type="project" value="UniProtKB"/>
</dbReference>
<dbReference type="GO" id="GO:0051085">
    <property type="term" value="P:chaperone cofactor-dependent protein refolding"/>
    <property type="evidence" value="ECO:0000314"/>
    <property type="project" value="UniProtKB"/>
</dbReference>
<dbReference type="GO" id="GO:0030900">
    <property type="term" value="P:forebrain development"/>
    <property type="evidence" value="ECO:0007669"/>
    <property type="project" value="Ensembl"/>
</dbReference>
<dbReference type="GO" id="GO:0090084">
    <property type="term" value="P:negative regulation of inclusion body assembly"/>
    <property type="evidence" value="ECO:0000314"/>
    <property type="project" value="UniProtKB"/>
</dbReference>
<dbReference type="GO" id="GO:0000122">
    <property type="term" value="P:negative regulation of transcription by RNA polymerase II"/>
    <property type="evidence" value="ECO:0000314"/>
    <property type="project" value="UniProtKB"/>
</dbReference>
<dbReference type="GO" id="GO:1903646">
    <property type="term" value="P:positive regulation of chaperone-mediated protein folding"/>
    <property type="evidence" value="ECO:0000314"/>
    <property type="project" value="BHF-UCL"/>
</dbReference>
<dbReference type="GO" id="GO:1900034">
    <property type="term" value="P:regulation of cellular response to heat"/>
    <property type="evidence" value="ECO:0000304"/>
    <property type="project" value="Reactome"/>
</dbReference>
<dbReference type="GO" id="GO:0006986">
    <property type="term" value="P:response to unfolded protein"/>
    <property type="evidence" value="ECO:0000304"/>
    <property type="project" value="ProtInc"/>
</dbReference>
<dbReference type="CDD" id="cd06257">
    <property type="entry name" value="DnaJ"/>
    <property type="match status" value="1"/>
</dbReference>
<dbReference type="CDD" id="cd10747">
    <property type="entry name" value="DnaJ_C"/>
    <property type="match status" value="1"/>
</dbReference>
<dbReference type="FunFam" id="1.10.287.110:FF:000005">
    <property type="entry name" value="DnaJ (Hsp40) homolog, subfamily B, member 4"/>
    <property type="match status" value="1"/>
</dbReference>
<dbReference type="FunFam" id="2.60.260.20:FF:000002">
    <property type="entry name" value="Dnaj homolog subfamily b member"/>
    <property type="match status" value="1"/>
</dbReference>
<dbReference type="FunFam" id="2.60.260.20:FF:000007">
    <property type="entry name" value="dnaJ homolog subfamily B member 5"/>
    <property type="match status" value="1"/>
</dbReference>
<dbReference type="Gene3D" id="1.10.287.110">
    <property type="entry name" value="DnaJ domain"/>
    <property type="match status" value="1"/>
</dbReference>
<dbReference type="Gene3D" id="2.60.260.20">
    <property type="entry name" value="Urease metallochaperone UreE, N-terminal domain"/>
    <property type="match status" value="2"/>
</dbReference>
<dbReference type="IDEAL" id="IID00446"/>
<dbReference type="InterPro" id="IPR002939">
    <property type="entry name" value="DnaJ_C"/>
</dbReference>
<dbReference type="InterPro" id="IPR001623">
    <property type="entry name" value="DnaJ_domain"/>
</dbReference>
<dbReference type="InterPro" id="IPR018253">
    <property type="entry name" value="DnaJ_domain_CS"/>
</dbReference>
<dbReference type="InterPro" id="IPR051339">
    <property type="entry name" value="DnaJ_subfamily_B"/>
</dbReference>
<dbReference type="InterPro" id="IPR008971">
    <property type="entry name" value="HSP40/DnaJ_pept-bd"/>
</dbReference>
<dbReference type="InterPro" id="IPR036869">
    <property type="entry name" value="J_dom_sf"/>
</dbReference>
<dbReference type="PANTHER" id="PTHR24078:SF568">
    <property type="entry name" value="DNAJ HOMOLOG SUBFAMILY B MEMBER 1"/>
    <property type="match status" value="1"/>
</dbReference>
<dbReference type="PANTHER" id="PTHR24078">
    <property type="entry name" value="DNAJ HOMOLOG SUBFAMILY C MEMBER"/>
    <property type="match status" value="1"/>
</dbReference>
<dbReference type="Pfam" id="PF00226">
    <property type="entry name" value="DnaJ"/>
    <property type="match status" value="1"/>
</dbReference>
<dbReference type="Pfam" id="PF01556">
    <property type="entry name" value="DnaJ_C"/>
    <property type="match status" value="1"/>
</dbReference>
<dbReference type="PRINTS" id="PR00625">
    <property type="entry name" value="JDOMAIN"/>
</dbReference>
<dbReference type="SMART" id="SM00271">
    <property type="entry name" value="DnaJ"/>
    <property type="match status" value="1"/>
</dbReference>
<dbReference type="SUPFAM" id="SSF46565">
    <property type="entry name" value="Chaperone J-domain"/>
    <property type="match status" value="1"/>
</dbReference>
<dbReference type="SUPFAM" id="SSF49493">
    <property type="entry name" value="HSP40/DnaJ peptide-binding domain"/>
    <property type="match status" value="2"/>
</dbReference>
<dbReference type="PROSITE" id="PS00636">
    <property type="entry name" value="DNAJ_1"/>
    <property type="match status" value="1"/>
</dbReference>
<dbReference type="PROSITE" id="PS50076">
    <property type="entry name" value="DNAJ_2"/>
    <property type="match status" value="1"/>
</dbReference>
<keyword id="KW-0002">3D-structure</keyword>
<keyword id="KW-0025">Alternative splicing</keyword>
<keyword id="KW-0143">Chaperone</keyword>
<keyword id="KW-0963">Cytoplasm</keyword>
<keyword id="KW-0903">Direct protein sequencing</keyword>
<keyword id="KW-0539">Nucleus</keyword>
<keyword id="KW-0597">Phosphoprotein</keyword>
<keyword id="KW-1267">Proteomics identification</keyword>
<keyword id="KW-1185">Reference proteome</keyword>
<keyword id="KW-0346">Stress response</keyword>
<proteinExistence type="evidence at protein level"/>